<keyword id="KW-0067">ATP-binding</keyword>
<keyword id="KW-0217">Developmental protein</keyword>
<keyword id="KW-0418">Kinase</keyword>
<keyword id="KW-0547">Nucleotide-binding</keyword>
<keyword id="KW-1185">Reference proteome</keyword>
<keyword id="KW-0727">SH2 domain</keyword>
<keyword id="KW-0728">SH3 domain</keyword>
<keyword id="KW-0808">Transferase</keyword>
<keyword id="KW-0829">Tyrosine-protein kinase</keyword>
<gene>
    <name evidence="12" type="primary">Src42A</name>
    <name type="synonym">Src41</name>
    <name evidence="12" type="synonym">TK5</name>
    <name evidence="12" type="ORF">CG44128</name>
</gene>
<dbReference type="EC" id="2.7.10.2"/>
<dbReference type="EMBL" id="D42125">
    <property type="protein sequence ID" value="BAA07705.1"/>
    <property type="molecule type" value="mRNA"/>
</dbReference>
<dbReference type="EMBL" id="AE013599">
    <property type="protein sequence ID" value="AAF57295.1"/>
    <property type="molecule type" value="Genomic_DNA"/>
</dbReference>
<dbReference type="EMBL" id="AY058652">
    <property type="protein sequence ID" value="AAL13881.1"/>
    <property type="molecule type" value="mRNA"/>
</dbReference>
<dbReference type="EMBL" id="S55977">
    <property type="protein sequence ID" value="AAB19907.1"/>
    <property type="molecule type" value="Genomic_DNA"/>
</dbReference>
<dbReference type="EMBL" id="AJ002911">
    <property type="protein sequence ID" value="CAA05746.1"/>
    <property type="molecule type" value="Genomic_DNA"/>
</dbReference>
<dbReference type="RefSeq" id="NP_476849.1">
    <property type="nucleotide sequence ID" value="NM_057501.4"/>
</dbReference>
<dbReference type="SMR" id="Q9V9J3"/>
<dbReference type="BioGRID" id="61430">
    <property type="interactions" value="55"/>
</dbReference>
<dbReference type="DIP" id="DIP-22220N"/>
<dbReference type="FunCoup" id="Q9V9J3">
    <property type="interactions" value="324"/>
</dbReference>
<dbReference type="IntAct" id="Q9V9J3">
    <property type="interactions" value="4"/>
</dbReference>
<dbReference type="MINT" id="Q9V9J3"/>
<dbReference type="STRING" id="7227.FBpp0307255"/>
<dbReference type="SwissPalm" id="Q9V9J3"/>
<dbReference type="PaxDb" id="7227-FBpp0085320"/>
<dbReference type="DNASU" id="35524"/>
<dbReference type="EnsemblMetazoa" id="FBtr0335275">
    <property type="protein sequence ID" value="FBpp0307254"/>
    <property type="gene ID" value="FBgn0264959"/>
</dbReference>
<dbReference type="GeneID" id="35524"/>
<dbReference type="KEGG" id="dme:Dmel_CG44128"/>
<dbReference type="AGR" id="FB:FBgn0264959"/>
<dbReference type="CTD" id="35524"/>
<dbReference type="FlyBase" id="FBgn0264959">
    <property type="gene designation" value="Src42A"/>
</dbReference>
<dbReference type="VEuPathDB" id="VectorBase:FBgn0264959"/>
<dbReference type="eggNOG" id="KOG0197">
    <property type="taxonomic scope" value="Eukaryota"/>
</dbReference>
<dbReference type="GeneTree" id="ENSGT00940000167963"/>
<dbReference type="HOGENOM" id="CLU_000288_7_2_1"/>
<dbReference type="InParanoid" id="Q9V9J3"/>
<dbReference type="OMA" id="EYKEASM"/>
<dbReference type="OrthoDB" id="28230at2759"/>
<dbReference type="PhylomeDB" id="Q9V9J3"/>
<dbReference type="BRENDA" id="2.7.10.2">
    <property type="organism ID" value="1994"/>
</dbReference>
<dbReference type="Reactome" id="R-DME-432553">
    <property type="pathway name" value="Phosphorylation of PER and TIM"/>
</dbReference>
<dbReference type="Reactome" id="R-DME-6798695">
    <property type="pathway name" value="Neutrophil degranulation"/>
</dbReference>
<dbReference type="Reactome" id="R-DME-8948751">
    <property type="pathway name" value="Regulation of PTEN stability and activity"/>
</dbReference>
<dbReference type="SignaLink" id="Q9V9J3"/>
<dbReference type="BioGRID-ORCS" id="35524">
    <property type="hits" value="1 hit in 3 CRISPR screens"/>
</dbReference>
<dbReference type="ChiTaRS" id="Src42A">
    <property type="organism name" value="fly"/>
</dbReference>
<dbReference type="GenomeRNAi" id="35524"/>
<dbReference type="PRO" id="PR:Q9V9J3"/>
<dbReference type="Proteomes" id="UP000000803">
    <property type="component" value="Chromosome 2R"/>
</dbReference>
<dbReference type="Bgee" id="FBgn0264959">
    <property type="expression patterns" value="Expressed in embryonic/larval hemocyte (Drosophila) and 231 other cell types or tissues"/>
</dbReference>
<dbReference type="ExpressionAtlas" id="Q9V9J3">
    <property type="expression patterns" value="baseline and differential"/>
</dbReference>
<dbReference type="GO" id="GO:0005737">
    <property type="term" value="C:cytoplasm"/>
    <property type="evidence" value="ECO:0007005"/>
    <property type="project" value="FlyBase"/>
</dbReference>
<dbReference type="GO" id="GO:0005829">
    <property type="term" value="C:cytosol"/>
    <property type="evidence" value="ECO:0000304"/>
    <property type="project" value="Reactome"/>
</dbReference>
<dbReference type="GO" id="GO:0005886">
    <property type="term" value="C:plasma membrane"/>
    <property type="evidence" value="ECO:0007005"/>
    <property type="project" value="FlyBase"/>
</dbReference>
<dbReference type="GO" id="GO:0005524">
    <property type="term" value="F:ATP binding"/>
    <property type="evidence" value="ECO:0007669"/>
    <property type="project" value="UniProtKB-KW"/>
</dbReference>
<dbReference type="GO" id="GO:0004715">
    <property type="term" value="F:non-membrane spanning protein tyrosine kinase activity"/>
    <property type="evidence" value="ECO:0000314"/>
    <property type="project" value="FlyBase"/>
</dbReference>
<dbReference type="GO" id="GO:0004713">
    <property type="term" value="F:protein tyrosine kinase activity"/>
    <property type="evidence" value="ECO:0000303"/>
    <property type="project" value="UniProtKB"/>
</dbReference>
<dbReference type="GO" id="GO:0005102">
    <property type="term" value="F:signaling receptor binding"/>
    <property type="evidence" value="ECO:0000318"/>
    <property type="project" value="GO_Central"/>
</dbReference>
<dbReference type="GO" id="GO:0051017">
    <property type="term" value="P:actin filament bundle assembly"/>
    <property type="evidence" value="ECO:0000315"/>
    <property type="project" value="FlyBase"/>
</dbReference>
<dbReference type="GO" id="GO:0034332">
    <property type="term" value="P:adherens junction organization"/>
    <property type="evidence" value="ECO:0000315"/>
    <property type="project" value="FlyBase"/>
</dbReference>
<dbReference type="GO" id="GO:0043277">
    <property type="term" value="P:apoptotic cell clearance"/>
    <property type="evidence" value="ECO:0000315"/>
    <property type="project" value="FlyBase"/>
</dbReference>
<dbReference type="GO" id="GO:0007411">
    <property type="term" value="P:axon guidance"/>
    <property type="evidence" value="ECO:0000315"/>
    <property type="project" value="FlyBase"/>
</dbReference>
<dbReference type="GO" id="GO:0030154">
    <property type="term" value="P:cell differentiation"/>
    <property type="evidence" value="ECO:0000318"/>
    <property type="project" value="GO_Central"/>
</dbReference>
<dbReference type="GO" id="GO:0016477">
    <property type="term" value="P:cell migration"/>
    <property type="evidence" value="ECO:0000315"/>
    <property type="project" value="FlyBase"/>
</dbReference>
<dbReference type="GO" id="GO:0007169">
    <property type="term" value="P:cell surface receptor protein tyrosine kinase signaling pathway"/>
    <property type="evidence" value="ECO:0000318"/>
    <property type="project" value="GO_Central"/>
</dbReference>
<dbReference type="GO" id="GO:0048749">
    <property type="term" value="P:compound eye development"/>
    <property type="evidence" value="ECO:0000315"/>
    <property type="project" value="FlyBase"/>
</dbReference>
<dbReference type="GO" id="GO:0042742">
    <property type="term" value="P:defense response to bacterium"/>
    <property type="evidence" value="ECO:0000315"/>
    <property type="project" value="FlyBase"/>
</dbReference>
<dbReference type="GO" id="GO:0007391">
    <property type="term" value="P:dorsal closure"/>
    <property type="evidence" value="ECO:0000315"/>
    <property type="project" value="FlyBase"/>
</dbReference>
<dbReference type="GO" id="GO:0007395">
    <property type="term" value="P:dorsal closure, spreading of leading edge cells"/>
    <property type="evidence" value="ECO:0000315"/>
    <property type="project" value="FlyBase"/>
</dbReference>
<dbReference type="GO" id="GO:0090136">
    <property type="term" value="P:epithelial cell-cell adhesion"/>
    <property type="evidence" value="ECO:0000315"/>
    <property type="project" value="FlyBase"/>
</dbReference>
<dbReference type="GO" id="GO:0046529">
    <property type="term" value="P:imaginal disc fusion, thorax closure"/>
    <property type="evidence" value="ECO:0000315"/>
    <property type="project" value="FlyBase"/>
</dbReference>
<dbReference type="GO" id="GO:0007476">
    <property type="term" value="P:imaginal disc-derived wing morphogenesis"/>
    <property type="evidence" value="ECO:0000315"/>
    <property type="project" value="FlyBase"/>
</dbReference>
<dbReference type="GO" id="GO:0036335">
    <property type="term" value="P:intestinal stem cell homeostasis"/>
    <property type="evidence" value="ECO:0000315"/>
    <property type="project" value="FlyBase"/>
</dbReference>
<dbReference type="GO" id="GO:0042059">
    <property type="term" value="P:negative regulation of epidermal growth factor receptor signaling pathway"/>
    <property type="evidence" value="ECO:0000316"/>
    <property type="project" value="FlyBase"/>
</dbReference>
<dbReference type="GO" id="GO:0045886">
    <property type="term" value="P:negative regulation of synaptic assembly at neuromuscular junction"/>
    <property type="evidence" value="ECO:0000316"/>
    <property type="project" value="FlyBase"/>
</dbReference>
<dbReference type="GO" id="GO:0007424">
    <property type="term" value="P:open tracheal system development"/>
    <property type="evidence" value="ECO:0000315"/>
    <property type="project" value="FlyBase"/>
</dbReference>
<dbReference type="GO" id="GO:0045742">
    <property type="term" value="P:positive regulation of epidermal growth factor receptor signaling pathway"/>
    <property type="evidence" value="ECO:0000315"/>
    <property type="project" value="FlyBase"/>
</dbReference>
<dbReference type="GO" id="GO:0070374">
    <property type="term" value="P:positive regulation of ERK1 and ERK2 cascade"/>
    <property type="evidence" value="ECO:0000314"/>
    <property type="project" value="FlyBase"/>
</dbReference>
<dbReference type="GO" id="GO:0106016">
    <property type="term" value="P:positive regulation of inflammatory response to wounding"/>
    <property type="evidence" value="ECO:0000316"/>
    <property type="project" value="FlyBase"/>
</dbReference>
<dbReference type="GO" id="GO:0045874">
    <property type="term" value="P:positive regulation of sevenless signaling pathway"/>
    <property type="evidence" value="ECO:0000314"/>
    <property type="project" value="FlyBase"/>
</dbReference>
<dbReference type="GO" id="GO:0048167">
    <property type="term" value="P:regulation of synaptic plasticity"/>
    <property type="evidence" value="ECO:0000316"/>
    <property type="project" value="FlyBase"/>
</dbReference>
<dbReference type="GO" id="GO:0007435">
    <property type="term" value="P:salivary gland morphogenesis"/>
    <property type="evidence" value="ECO:0000315"/>
    <property type="project" value="FlyBase"/>
</dbReference>
<dbReference type="CDD" id="cd05068">
    <property type="entry name" value="PTKc_Frk_like"/>
    <property type="match status" value="1"/>
</dbReference>
<dbReference type="CDD" id="cd10370">
    <property type="entry name" value="SH2_Src_Src42"/>
    <property type="match status" value="1"/>
</dbReference>
<dbReference type="CDD" id="cd11845">
    <property type="entry name" value="SH3_Src_like"/>
    <property type="match status" value="1"/>
</dbReference>
<dbReference type="FunFam" id="1.10.510.10:FF:000318">
    <property type="entry name" value="Tyrosine-protein kinase"/>
    <property type="match status" value="1"/>
</dbReference>
<dbReference type="FunFam" id="2.30.30.40:FF:000208">
    <property type="entry name" value="Tyrosine-protein kinase"/>
    <property type="match status" value="1"/>
</dbReference>
<dbReference type="FunFam" id="3.30.200.20:FF:000053">
    <property type="entry name" value="Tyrosine-protein kinase"/>
    <property type="match status" value="1"/>
</dbReference>
<dbReference type="FunFam" id="3.30.505.10:FF:000044">
    <property type="entry name" value="Tyrosine-protein kinase"/>
    <property type="match status" value="1"/>
</dbReference>
<dbReference type="Gene3D" id="3.30.200.20">
    <property type="entry name" value="Phosphorylase Kinase, domain 1"/>
    <property type="match status" value="1"/>
</dbReference>
<dbReference type="Gene3D" id="3.30.505.10">
    <property type="entry name" value="SH2 domain"/>
    <property type="match status" value="1"/>
</dbReference>
<dbReference type="Gene3D" id="2.30.30.40">
    <property type="entry name" value="SH3 Domains"/>
    <property type="match status" value="1"/>
</dbReference>
<dbReference type="Gene3D" id="1.10.510.10">
    <property type="entry name" value="Transferase(Phosphotransferase) domain 1"/>
    <property type="match status" value="1"/>
</dbReference>
<dbReference type="InterPro" id="IPR011009">
    <property type="entry name" value="Kinase-like_dom_sf"/>
</dbReference>
<dbReference type="InterPro" id="IPR050198">
    <property type="entry name" value="Non-receptor_tyrosine_kinases"/>
</dbReference>
<dbReference type="InterPro" id="IPR000719">
    <property type="entry name" value="Prot_kinase_dom"/>
</dbReference>
<dbReference type="InterPro" id="IPR017441">
    <property type="entry name" value="Protein_kinase_ATP_BS"/>
</dbReference>
<dbReference type="InterPro" id="IPR001245">
    <property type="entry name" value="Ser-Thr/Tyr_kinase_cat_dom"/>
</dbReference>
<dbReference type="InterPro" id="IPR000980">
    <property type="entry name" value="SH2"/>
</dbReference>
<dbReference type="InterPro" id="IPR036860">
    <property type="entry name" value="SH2_dom_sf"/>
</dbReference>
<dbReference type="InterPro" id="IPR036028">
    <property type="entry name" value="SH3-like_dom_sf"/>
</dbReference>
<dbReference type="InterPro" id="IPR001452">
    <property type="entry name" value="SH3_domain"/>
</dbReference>
<dbReference type="InterPro" id="IPR008266">
    <property type="entry name" value="Tyr_kinase_AS"/>
</dbReference>
<dbReference type="InterPro" id="IPR020635">
    <property type="entry name" value="Tyr_kinase_cat_dom"/>
</dbReference>
<dbReference type="PANTHER" id="PTHR24418">
    <property type="entry name" value="TYROSINE-PROTEIN KINASE"/>
    <property type="match status" value="1"/>
</dbReference>
<dbReference type="Pfam" id="PF07714">
    <property type="entry name" value="PK_Tyr_Ser-Thr"/>
    <property type="match status" value="1"/>
</dbReference>
<dbReference type="Pfam" id="PF00017">
    <property type="entry name" value="SH2"/>
    <property type="match status" value="1"/>
</dbReference>
<dbReference type="Pfam" id="PF00018">
    <property type="entry name" value="SH3_1"/>
    <property type="match status" value="1"/>
</dbReference>
<dbReference type="PRINTS" id="PR00401">
    <property type="entry name" value="SH2DOMAIN"/>
</dbReference>
<dbReference type="PRINTS" id="PR00452">
    <property type="entry name" value="SH3DOMAIN"/>
</dbReference>
<dbReference type="PRINTS" id="PR00109">
    <property type="entry name" value="TYRKINASE"/>
</dbReference>
<dbReference type="SMART" id="SM00252">
    <property type="entry name" value="SH2"/>
    <property type="match status" value="1"/>
</dbReference>
<dbReference type="SMART" id="SM00326">
    <property type="entry name" value="SH3"/>
    <property type="match status" value="1"/>
</dbReference>
<dbReference type="SMART" id="SM00219">
    <property type="entry name" value="TyrKc"/>
    <property type="match status" value="1"/>
</dbReference>
<dbReference type="SUPFAM" id="SSF56112">
    <property type="entry name" value="Protein kinase-like (PK-like)"/>
    <property type="match status" value="1"/>
</dbReference>
<dbReference type="SUPFAM" id="SSF55550">
    <property type="entry name" value="SH2 domain"/>
    <property type="match status" value="1"/>
</dbReference>
<dbReference type="SUPFAM" id="SSF50044">
    <property type="entry name" value="SH3-domain"/>
    <property type="match status" value="1"/>
</dbReference>
<dbReference type="PROSITE" id="PS00107">
    <property type="entry name" value="PROTEIN_KINASE_ATP"/>
    <property type="match status" value="1"/>
</dbReference>
<dbReference type="PROSITE" id="PS50011">
    <property type="entry name" value="PROTEIN_KINASE_DOM"/>
    <property type="match status" value="1"/>
</dbReference>
<dbReference type="PROSITE" id="PS00109">
    <property type="entry name" value="PROTEIN_KINASE_TYR"/>
    <property type="match status" value="1"/>
</dbReference>
<dbReference type="PROSITE" id="PS50001">
    <property type="entry name" value="SH2"/>
    <property type="match status" value="1"/>
</dbReference>
<dbReference type="PROSITE" id="PS50002">
    <property type="entry name" value="SH3"/>
    <property type="match status" value="1"/>
</dbReference>
<protein>
    <recommendedName>
        <fullName>Tyrosine-protein kinase Src42A</fullName>
        <ecNumber>2.7.10.2</ecNumber>
    </recommendedName>
    <alternativeName>
        <fullName>Tyrosine-protein kinase Src41</fullName>
        <shortName>Dsrc41</shortName>
    </alternativeName>
</protein>
<sequence length="517" mass="59069">MGNCLTTQKGEPDKPADRIKLDDPPTIGVGVGVPQIPMPSHAGQPPEQIRPVPQIPESETAGANAKIFVALYDYDARTDEDLSFRKGEHLEILNDTQGDWWLARSKKTRSEGYIPSNYVAKLKSIEAEPWYFRKIKRIEAEKKLLLPENEHGAFLIRDSESRHNDYSLSVRDGDTVKHYRIRQLDEGGFFIARRTTFRTLQELVEHYSKDSDGLCVNLCKPCVQIEKPVTEGLSHRTRDQWEIDRTSLKFVRKLGSGQFGDVWEGLWNNTTPVAIKTLKSGTMDPKDFLAEAQIMKKLRHTKLIQLYAVCTVEEPIYIITELMKHGSLLEYLQAIAGKGRSLKMQTLIDMAAQIAAGMAYLESQNYIHRDLAARNVLVGDGNIVKIADFGLARLIKEDEYEARVGARFPIKWTAPEAANYSKFSIKSDVWSFGILLTELVTYGRIPYPGMTNAEVLTQVEHGYRMPQPPNCEPRLYEIMLECWHKDPMRRPTFETLQWKLEDFYTSDQSDYKEAQAY</sequence>
<accession>Q9V9J3</accession>
<accession>O18369</accession>
<accession>Q0E9P0</accession>
<accession>Q26297</accession>
<accession>Q94879</accession>
<organism>
    <name type="scientific">Drosophila melanogaster</name>
    <name type="common">Fruit fly</name>
    <dbReference type="NCBI Taxonomy" id="7227"/>
    <lineage>
        <taxon>Eukaryota</taxon>
        <taxon>Metazoa</taxon>
        <taxon>Ecdysozoa</taxon>
        <taxon>Arthropoda</taxon>
        <taxon>Hexapoda</taxon>
        <taxon>Insecta</taxon>
        <taxon>Pterygota</taxon>
        <taxon>Neoptera</taxon>
        <taxon>Endopterygota</taxon>
        <taxon>Diptera</taxon>
        <taxon>Brachycera</taxon>
        <taxon>Muscomorpha</taxon>
        <taxon>Ephydroidea</taxon>
        <taxon>Drosophilidae</taxon>
        <taxon>Drosophila</taxon>
        <taxon>Sophophora</taxon>
    </lineage>
</organism>
<proteinExistence type="evidence at protein level"/>
<name>SRC42_DROME</name>
<evidence type="ECO:0000255" key="1">
    <source>
        <dbReference type="PROSITE-ProRule" id="PRU00159"/>
    </source>
</evidence>
<evidence type="ECO:0000255" key="2">
    <source>
        <dbReference type="PROSITE-ProRule" id="PRU00191"/>
    </source>
</evidence>
<evidence type="ECO:0000255" key="3">
    <source>
        <dbReference type="PROSITE-ProRule" id="PRU00192"/>
    </source>
</evidence>
<evidence type="ECO:0000255" key="4">
    <source>
        <dbReference type="PROSITE-ProRule" id="PRU10028"/>
    </source>
</evidence>
<evidence type="ECO:0000256" key="5">
    <source>
        <dbReference type="SAM" id="MobiDB-lite"/>
    </source>
</evidence>
<evidence type="ECO:0000269" key="6">
    <source>
    </source>
</evidence>
<evidence type="ECO:0000269" key="7">
    <source>
    </source>
</evidence>
<evidence type="ECO:0000269" key="8">
    <source>
    </source>
</evidence>
<evidence type="ECO:0000269" key="9">
    <source>
    </source>
</evidence>
<evidence type="ECO:0000269" key="10">
    <source>
    </source>
</evidence>
<evidence type="ECO:0000305" key="11"/>
<evidence type="ECO:0000312" key="12">
    <source>
        <dbReference type="FlyBase" id="FBgn0264959"/>
    </source>
</evidence>
<comment type="function">
    <text evidence="6 7 8 9 10">Required directly or indirectly for the phosphorylation of drpr which is necessary for the interaction of drpr with shark and subsequent glial phagocytic activity (PubMed:18432193). Together with drpr and shark, promotes the migration of macrophages to sites of wounding as part of a signaling cascade where Src42A detects production of hydrogen peroxide at wound sites which triggers phosphorylation of drpr and subsequent recruitment and activation of shark (PubMed:26028435). Essential for correct eye morphogenesis (ommatidial R7 neuron formation) which requires the Ras1/MAPK signal transduction pathway (PubMed:8682295). May be involved in the regulation of cytoskeleton organization and cell-cell contacts in developing ommatidia (PubMed:8682295). Involved in phosphorylation of Dscam1, a cell surface receptor involved in targeting of growing axons during eye morphogenesis, and its interaction partner the SH2/SH3 adapter protein dock/dreadlocks (PubMed:12014990). During embryogenesis, involved in regulation of dorsal closure where it may have a role in activating the JNK pathway in leading edge cells during this process (PubMed:16831834).</text>
</comment>
<comment type="catalytic activity">
    <reaction evidence="4">
        <text>L-tyrosyl-[protein] + ATP = O-phospho-L-tyrosyl-[protein] + ADP + H(+)</text>
        <dbReference type="Rhea" id="RHEA:10596"/>
        <dbReference type="Rhea" id="RHEA-COMP:10136"/>
        <dbReference type="Rhea" id="RHEA-COMP:20101"/>
        <dbReference type="ChEBI" id="CHEBI:15378"/>
        <dbReference type="ChEBI" id="CHEBI:30616"/>
        <dbReference type="ChEBI" id="CHEBI:46858"/>
        <dbReference type="ChEBI" id="CHEBI:61978"/>
        <dbReference type="ChEBI" id="CHEBI:456216"/>
        <dbReference type="EC" id="2.7.10.2"/>
    </reaction>
</comment>
<comment type="tissue specificity">
    <text evidence="10">Ubiquitous in early embryos, in stages 13-16 expression is seen in visceral mesoderm, hindgut, brain, anal pads and ventral ganglions. In larvae, expression is in CNS, wing disk, leg disk and photoreceptor precursors in the eye-antenna disks posterior to the morphogenetic furrow.</text>
</comment>
<comment type="developmental stage">
    <text evidence="10">In early embryos expression is very low, expression increases during embryogenesis. Also expressed in larvae and pupae.</text>
</comment>
<comment type="disruption phenotype">
    <text evidence="8 9">Following epithelial wounding, no migration of macrophages to wound sites (PubMed:26028435). RNAi-mediated knockdown in glial cells potently suppresses glial phagocytic activity with drpr not recruited to severed maxillary palp axons, blockage of glial hypertrophy, blockage of drpr up-regulation after antennal ablation and reduced clearance of severed axons in the central nervous system (PubMed:18432193).</text>
</comment>
<comment type="similarity">
    <text evidence="1">Belongs to the protein kinase superfamily. Tyr protein kinase family. SRC subfamily.</text>
</comment>
<reference evidence="11" key="1">
    <citation type="journal article" date="1996" name="Genes Dev.">
        <title>Regulation of cell-cell contacts in developing Drosophila eyes by Dsrc41, a new, close relative of vertebrate c-src.</title>
        <authorList>
            <person name="Takahashi F."/>
            <person name="Endo S."/>
            <person name="Kojima T."/>
            <person name="Saigo K."/>
        </authorList>
    </citation>
    <scope>NUCLEOTIDE SEQUENCE [MRNA]</scope>
    <scope>FUNCTION</scope>
    <scope>TISSUE SPECIFICITY</scope>
    <scope>DEVELOPMENTAL STAGE</scope>
    <source>
        <strain>Canton-S</strain>
        <tissue>Pupae</tissue>
    </source>
</reference>
<reference evidence="11" key="2">
    <citation type="journal article" date="2000" name="Science">
        <title>The genome sequence of Drosophila melanogaster.</title>
        <authorList>
            <person name="Adams M.D."/>
            <person name="Celniker S.E."/>
            <person name="Holt R.A."/>
            <person name="Evans C.A."/>
            <person name="Gocayne J.D."/>
            <person name="Amanatides P.G."/>
            <person name="Scherer S.E."/>
            <person name="Li P.W."/>
            <person name="Hoskins R.A."/>
            <person name="Galle R.F."/>
            <person name="George R.A."/>
            <person name="Lewis S.E."/>
            <person name="Richards S."/>
            <person name="Ashburner M."/>
            <person name="Henderson S.N."/>
            <person name="Sutton G.G."/>
            <person name="Wortman J.R."/>
            <person name="Yandell M.D."/>
            <person name="Zhang Q."/>
            <person name="Chen L.X."/>
            <person name="Brandon R.C."/>
            <person name="Rogers Y.-H.C."/>
            <person name="Blazej R.G."/>
            <person name="Champe M."/>
            <person name="Pfeiffer B.D."/>
            <person name="Wan K.H."/>
            <person name="Doyle C."/>
            <person name="Baxter E.G."/>
            <person name="Helt G."/>
            <person name="Nelson C.R."/>
            <person name="Miklos G.L.G."/>
            <person name="Abril J.F."/>
            <person name="Agbayani A."/>
            <person name="An H.-J."/>
            <person name="Andrews-Pfannkoch C."/>
            <person name="Baldwin D."/>
            <person name="Ballew R.M."/>
            <person name="Basu A."/>
            <person name="Baxendale J."/>
            <person name="Bayraktaroglu L."/>
            <person name="Beasley E.M."/>
            <person name="Beeson K.Y."/>
            <person name="Benos P.V."/>
            <person name="Berman B.P."/>
            <person name="Bhandari D."/>
            <person name="Bolshakov S."/>
            <person name="Borkova D."/>
            <person name="Botchan M.R."/>
            <person name="Bouck J."/>
            <person name="Brokstein P."/>
            <person name="Brottier P."/>
            <person name="Burtis K.C."/>
            <person name="Busam D.A."/>
            <person name="Butler H."/>
            <person name="Cadieu E."/>
            <person name="Center A."/>
            <person name="Chandra I."/>
            <person name="Cherry J.M."/>
            <person name="Cawley S."/>
            <person name="Dahlke C."/>
            <person name="Davenport L.B."/>
            <person name="Davies P."/>
            <person name="de Pablos B."/>
            <person name="Delcher A."/>
            <person name="Deng Z."/>
            <person name="Mays A.D."/>
            <person name="Dew I."/>
            <person name="Dietz S.M."/>
            <person name="Dodson K."/>
            <person name="Doup L.E."/>
            <person name="Downes M."/>
            <person name="Dugan-Rocha S."/>
            <person name="Dunkov B.C."/>
            <person name="Dunn P."/>
            <person name="Durbin K.J."/>
            <person name="Evangelista C.C."/>
            <person name="Ferraz C."/>
            <person name="Ferriera S."/>
            <person name="Fleischmann W."/>
            <person name="Fosler C."/>
            <person name="Gabrielian A.E."/>
            <person name="Garg N.S."/>
            <person name="Gelbart W.M."/>
            <person name="Glasser K."/>
            <person name="Glodek A."/>
            <person name="Gong F."/>
            <person name="Gorrell J.H."/>
            <person name="Gu Z."/>
            <person name="Guan P."/>
            <person name="Harris M."/>
            <person name="Harris N.L."/>
            <person name="Harvey D.A."/>
            <person name="Heiman T.J."/>
            <person name="Hernandez J.R."/>
            <person name="Houck J."/>
            <person name="Hostin D."/>
            <person name="Houston K.A."/>
            <person name="Howland T.J."/>
            <person name="Wei M.-H."/>
            <person name="Ibegwam C."/>
            <person name="Jalali M."/>
            <person name="Kalush F."/>
            <person name="Karpen G.H."/>
            <person name="Ke Z."/>
            <person name="Kennison J.A."/>
            <person name="Ketchum K.A."/>
            <person name="Kimmel B.E."/>
            <person name="Kodira C.D."/>
            <person name="Kraft C.L."/>
            <person name="Kravitz S."/>
            <person name="Kulp D."/>
            <person name="Lai Z."/>
            <person name="Lasko P."/>
            <person name="Lei Y."/>
            <person name="Levitsky A.A."/>
            <person name="Li J.H."/>
            <person name="Li Z."/>
            <person name="Liang Y."/>
            <person name="Lin X."/>
            <person name="Liu X."/>
            <person name="Mattei B."/>
            <person name="McIntosh T.C."/>
            <person name="McLeod M.P."/>
            <person name="McPherson D."/>
            <person name="Merkulov G."/>
            <person name="Milshina N.V."/>
            <person name="Mobarry C."/>
            <person name="Morris J."/>
            <person name="Moshrefi A."/>
            <person name="Mount S.M."/>
            <person name="Moy M."/>
            <person name="Murphy B."/>
            <person name="Murphy L."/>
            <person name="Muzny D.M."/>
            <person name="Nelson D.L."/>
            <person name="Nelson D.R."/>
            <person name="Nelson K.A."/>
            <person name="Nixon K."/>
            <person name="Nusskern D.R."/>
            <person name="Pacleb J.M."/>
            <person name="Palazzolo M."/>
            <person name="Pittman G.S."/>
            <person name="Pan S."/>
            <person name="Pollard J."/>
            <person name="Puri V."/>
            <person name="Reese M.G."/>
            <person name="Reinert K."/>
            <person name="Remington K."/>
            <person name="Saunders R.D.C."/>
            <person name="Scheeler F."/>
            <person name="Shen H."/>
            <person name="Shue B.C."/>
            <person name="Siden-Kiamos I."/>
            <person name="Simpson M."/>
            <person name="Skupski M.P."/>
            <person name="Smith T.J."/>
            <person name="Spier E."/>
            <person name="Spradling A.C."/>
            <person name="Stapleton M."/>
            <person name="Strong R."/>
            <person name="Sun E."/>
            <person name="Svirskas R."/>
            <person name="Tector C."/>
            <person name="Turner R."/>
            <person name="Venter E."/>
            <person name="Wang A.H."/>
            <person name="Wang X."/>
            <person name="Wang Z.-Y."/>
            <person name="Wassarman D.A."/>
            <person name="Weinstock G.M."/>
            <person name="Weissenbach J."/>
            <person name="Williams S.M."/>
            <person name="Woodage T."/>
            <person name="Worley K.C."/>
            <person name="Wu D."/>
            <person name="Yang S."/>
            <person name="Yao Q.A."/>
            <person name="Ye J."/>
            <person name="Yeh R.-F."/>
            <person name="Zaveri J.S."/>
            <person name="Zhan M."/>
            <person name="Zhang G."/>
            <person name="Zhao Q."/>
            <person name="Zheng L."/>
            <person name="Zheng X.H."/>
            <person name="Zhong F.N."/>
            <person name="Zhong W."/>
            <person name="Zhou X."/>
            <person name="Zhu S.C."/>
            <person name="Zhu X."/>
            <person name="Smith H.O."/>
            <person name="Gibbs R.A."/>
            <person name="Myers E.W."/>
            <person name="Rubin G.M."/>
            <person name="Venter J.C."/>
        </authorList>
    </citation>
    <scope>NUCLEOTIDE SEQUENCE [LARGE SCALE GENOMIC DNA]</scope>
    <source>
        <strain>Berkeley</strain>
    </source>
</reference>
<reference key="3">
    <citation type="journal article" date="2002" name="Genome Biol.">
        <title>Annotation of the Drosophila melanogaster euchromatic genome: a systematic review.</title>
        <authorList>
            <person name="Misra S."/>
            <person name="Crosby M.A."/>
            <person name="Mungall C.J."/>
            <person name="Matthews B.B."/>
            <person name="Campbell K.S."/>
            <person name="Hradecky P."/>
            <person name="Huang Y."/>
            <person name="Kaminker J.S."/>
            <person name="Millburn G.H."/>
            <person name="Prochnik S.E."/>
            <person name="Smith C.D."/>
            <person name="Tupy J.L."/>
            <person name="Whitfield E.J."/>
            <person name="Bayraktaroglu L."/>
            <person name="Berman B.P."/>
            <person name="Bettencourt B.R."/>
            <person name="Celniker S.E."/>
            <person name="de Grey A.D.N.J."/>
            <person name="Drysdale R.A."/>
            <person name="Harris N.L."/>
            <person name="Richter J."/>
            <person name="Russo S."/>
            <person name="Schroeder A.J."/>
            <person name="Shu S.Q."/>
            <person name="Stapleton M."/>
            <person name="Yamada C."/>
            <person name="Ashburner M."/>
            <person name="Gelbart W.M."/>
            <person name="Rubin G.M."/>
            <person name="Lewis S.E."/>
        </authorList>
    </citation>
    <scope>GENOME REANNOTATION</scope>
    <source>
        <strain>Berkeley</strain>
    </source>
</reference>
<reference key="4">
    <citation type="journal article" date="2002" name="Genome Biol.">
        <title>A Drosophila full-length cDNA resource.</title>
        <authorList>
            <person name="Stapleton M."/>
            <person name="Carlson J.W."/>
            <person name="Brokstein P."/>
            <person name="Yu C."/>
            <person name="Champe M."/>
            <person name="George R.A."/>
            <person name="Guarin H."/>
            <person name="Kronmiller B."/>
            <person name="Pacleb J.M."/>
            <person name="Park S."/>
            <person name="Wan K.H."/>
            <person name="Rubin G.M."/>
            <person name="Celniker S.E."/>
        </authorList>
    </citation>
    <scope>NUCLEOTIDE SEQUENCE [LARGE SCALE MRNA]</scope>
    <source>
        <strain>Berkeley</strain>
        <tissue>Embryo</tissue>
    </source>
</reference>
<reference evidence="11" key="5">
    <citation type="journal article" date="1991" name="FEBS Lett.">
        <title>Identification of seven novel protein-tyrosine kinase genes of Drosophila by the polymerase chain reaction.</title>
        <authorList>
            <person name="Shishido E."/>
            <person name="Emori Y."/>
            <person name="Saigo K."/>
        </authorList>
    </citation>
    <scope>NUCLEOTIDE SEQUENCE [GENOMIC DNA] OF 374-428</scope>
</reference>
<reference evidence="11" key="6">
    <citation type="journal article" date="1998" name="Biochem. Biophys. Res. Commun.">
        <title>Sampling the genomic pool of protein tyrosine kinase genes using the polymerase chain reaction with genomic DNA.</title>
        <authorList>
            <person name="Oates A.C."/>
            <person name="Wollberg P."/>
            <person name="Achen M.G."/>
            <person name="Wilks A.F."/>
        </authorList>
    </citation>
    <scope>NUCLEOTIDE SEQUENCE [GENOMIC DNA] OF 376-427</scope>
    <source>
        <tissue>Embryo</tissue>
    </source>
</reference>
<reference key="7">
    <citation type="journal article" date="2002" name="Biochem. J.">
        <title>Use of double-stranded RNA-mediated interference to determine the substrates of protein tyrosine kinases and phosphatases.</title>
        <authorList>
            <person name="Muda M."/>
            <person name="Worby C.A."/>
            <person name="Simonson-Leff N."/>
            <person name="Clemens J.C."/>
            <person name="Dixon J.E."/>
        </authorList>
    </citation>
    <scope>FUNCTION</scope>
</reference>
<reference key="8">
    <citation type="journal article" date="2006" name="Development">
        <title>The Fes/Fer non-receptor tyrosine kinase cooperates with Src42A to regulate dorsal closure in Drosophila.</title>
        <authorList>
            <person name="Murray M.J."/>
            <person name="Davidson C.M."/>
            <person name="Hayward N.M."/>
            <person name="Brand A.H."/>
        </authorList>
    </citation>
    <scope>FUNCTION</scope>
    <scope>MUTAGENESIS OF GLY-2</scope>
</reference>
<reference key="9">
    <citation type="journal article" date="2008" name="Nature">
        <title>Draper-dependent glial phagocytic activity is mediated by Src and Syk family kinase signalling.</title>
        <authorList>
            <person name="Ziegenfuss J.S."/>
            <person name="Biswas R."/>
            <person name="Avery M.A."/>
            <person name="Hong K."/>
            <person name="Sheehan A.E."/>
            <person name="Yeung Y.G."/>
            <person name="Stanley E.R."/>
            <person name="Freeman M.R."/>
        </authorList>
    </citation>
    <scope>FUNCTION</scope>
    <scope>DISRUPTION PHENOTYPE</scope>
</reference>
<reference key="10">
    <citation type="journal article" date="2015" name="Curr. Biol.">
        <title>Draper/CED-1 mediates an ancient damage response to control inflammatory blood cell migration in vivo.</title>
        <authorList>
            <person name="Evans I.R."/>
            <person name="Rodrigues F.S."/>
            <person name="Armitage E.L."/>
            <person name="Wood W."/>
        </authorList>
    </citation>
    <scope>FUNCTION</scope>
    <scope>DISRUPTION PHENOTYPE</scope>
</reference>
<feature type="chain" id="PRO_0000088139" description="Tyrosine-protein kinase Src42A">
    <location>
        <begin position="1"/>
        <end position="517"/>
    </location>
</feature>
<feature type="domain" description="SH3" evidence="3 11">
    <location>
        <begin position="63"/>
        <end position="124"/>
    </location>
</feature>
<feature type="domain" description="SH2" evidence="2 11">
    <location>
        <begin position="130"/>
        <end position="222"/>
    </location>
</feature>
<feature type="domain" description="Protein kinase" evidence="1">
    <location>
        <begin position="248"/>
        <end position="504"/>
    </location>
</feature>
<feature type="region of interest" description="Disordered" evidence="5">
    <location>
        <begin position="1"/>
        <end position="47"/>
    </location>
</feature>
<feature type="compositionally biased region" description="Basic and acidic residues" evidence="5">
    <location>
        <begin position="10"/>
        <end position="23"/>
    </location>
</feature>
<feature type="active site" description="Proton acceptor" evidence="1 4">
    <location>
        <position position="370"/>
    </location>
</feature>
<feature type="binding site" evidence="1">
    <location>
        <begin position="254"/>
        <end position="262"/>
    </location>
    <ligand>
        <name>ATP</name>
        <dbReference type="ChEBI" id="CHEBI:30616"/>
    </ligand>
</feature>
<feature type="binding site" evidence="1">
    <location>
        <position position="276"/>
    </location>
    <ligand>
        <name>ATP</name>
        <dbReference type="ChEBI" id="CHEBI:30616"/>
    </ligand>
</feature>
<feature type="mutagenesis site" description="In Src42A-myri; 63% of mutants die during embryogenesis. In embryos, leading edge cell morphology is irregular, the actomyosin cable is disrupted and dorsal closure is delayed. Stage 16 embryos, which have undergone dorsal closure, have an irregular arrangement of epidermal cells." evidence="7">
    <original>G</original>
    <variation>D</variation>
    <location>
        <position position="2"/>
    </location>
</feature>
<feature type="sequence conflict" description="In Ref. 1; BAA07705." evidence="11" ref="1">
    <original>A</original>
    <variation>V</variation>
    <location>
        <position position="65"/>
    </location>
</feature>
<feature type="sequence conflict" description="In Ref. 5; AAB19907 and 6; CAA05746." evidence="11" ref="5 6">
    <original>V</original>
    <variation>I</variation>
    <location>
        <position position="376"/>
    </location>
</feature>
<feature type="sequence conflict" description="In Ref. 5; AAB19907." evidence="11" ref="5">
    <original>GNIVKI</original>
    <variation>SNVVKM</variation>
    <location>
        <begin position="381"/>
        <end position="386"/>
    </location>
</feature>